<sequence>MLIFEGKEIETDTEGYLKESSQWSEPLAVVIAENEGIALSPEHWEVVRFVRDFYLEFNTSPAIRMLVKAMANKFGEEKGNSRYLYRLFPKGPAKQATKIAGLPKPVKCI</sequence>
<accession>Q8FJ69</accession>
<protein>
    <recommendedName>
        <fullName>Sulfurtransferase TusE</fullName>
        <ecNumber>2.8.1.-</ecNumber>
    </recommendedName>
    <alternativeName>
        <fullName>tRNA 2-thiouridine synthesizing protein E</fullName>
    </alternativeName>
</protein>
<keyword id="KW-0963">Cytoplasm</keyword>
<keyword id="KW-1185">Reference proteome</keyword>
<keyword id="KW-0808">Transferase</keyword>
<keyword id="KW-0819">tRNA processing</keyword>
<name>TUSE_ECOL6</name>
<proteinExistence type="inferred from homology"/>
<evidence type="ECO:0000250" key="1"/>
<evidence type="ECO:0000305" key="2"/>
<comment type="function">
    <text evidence="1">Part of a sulfur-relay system required for 2-thiolation of 5-methylaminomethyl-2-thiouridine (mnm(5)s(2)U) at tRNA wobble positions. Could accept sulfur from TusD (By similarity).</text>
</comment>
<comment type="subunit">
    <text evidence="1">Interacts with the TusBCD complex. Interacts with MnmA (By similarity).</text>
</comment>
<comment type="subcellular location">
    <subcellularLocation>
        <location evidence="1">Cytoplasm</location>
    </subcellularLocation>
</comment>
<comment type="similarity">
    <text evidence="2">Belongs to the DsrC/TusE family.</text>
</comment>
<dbReference type="EC" id="2.8.1.-"/>
<dbReference type="EMBL" id="AE014075">
    <property type="protein sequence ID" value="AAN79575.1"/>
    <property type="molecule type" value="Genomic_DNA"/>
</dbReference>
<dbReference type="RefSeq" id="WP_000904439.1">
    <property type="nucleotide sequence ID" value="NZ_CP051263.1"/>
</dbReference>
<dbReference type="SMR" id="Q8FJ69"/>
<dbReference type="STRING" id="199310.c1107"/>
<dbReference type="KEGG" id="ecc:c1107"/>
<dbReference type="eggNOG" id="COG2920">
    <property type="taxonomic scope" value="Bacteria"/>
</dbReference>
<dbReference type="HOGENOM" id="CLU_153199_1_0_6"/>
<dbReference type="BioCyc" id="ECOL199310:C1107-MONOMER"/>
<dbReference type="Proteomes" id="UP000001410">
    <property type="component" value="Chromosome"/>
</dbReference>
<dbReference type="GO" id="GO:0005737">
    <property type="term" value="C:cytoplasm"/>
    <property type="evidence" value="ECO:0007669"/>
    <property type="project" value="UniProtKB-SubCell"/>
</dbReference>
<dbReference type="GO" id="GO:0097163">
    <property type="term" value="F:sulfur carrier activity"/>
    <property type="evidence" value="ECO:0007669"/>
    <property type="project" value="TreeGrafter"/>
</dbReference>
<dbReference type="GO" id="GO:0016740">
    <property type="term" value="F:transferase activity"/>
    <property type="evidence" value="ECO:0007669"/>
    <property type="project" value="UniProtKB-KW"/>
</dbReference>
<dbReference type="GO" id="GO:0002143">
    <property type="term" value="P:tRNA wobble position uridine thiolation"/>
    <property type="evidence" value="ECO:0007669"/>
    <property type="project" value="TreeGrafter"/>
</dbReference>
<dbReference type="FunFam" id="1.10.10.370:FF:000001">
    <property type="entry name" value="Sulfurtransferase"/>
    <property type="match status" value="1"/>
</dbReference>
<dbReference type="FunFam" id="3.30.1420.10:FF:000001">
    <property type="entry name" value="Sulfurtransferase"/>
    <property type="match status" value="1"/>
</dbReference>
<dbReference type="Gene3D" id="3.30.1420.10">
    <property type="match status" value="1"/>
</dbReference>
<dbReference type="Gene3D" id="1.10.10.370">
    <property type="entry name" value="DsrC-like protein, C-terminal domain"/>
    <property type="match status" value="1"/>
</dbReference>
<dbReference type="InterPro" id="IPR042072">
    <property type="entry name" value="DsrC-like_C"/>
</dbReference>
<dbReference type="InterPro" id="IPR025526">
    <property type="entry name" value="DsrC-like_dom_sf"/>
</dbReference>
<dbReference type="InterPro" id="IPR043163">
    <property type="entry name" value="DsrC-like_N"/>
</dbReference>
<dbReference type="InterPro" id="IPR007453">
    <property type="entry name" value="DsrC/TusE"/>
</dbReference>
<dbReference type="NCBIfam" id="TIGR03342">
    <property type="entry name" value="dsrC_tusE_dsvC"/>
    <property type="match status" value="1"/>
</dbReference>
<dbReference type="NCBIfam" id="NF008562">
    <property type="entry name" value="PRK11508.1"/>
    <property type="match status" value="1"/>
</dbReference>
<dbReference type="PANTHER" id="PTHR37010">
    <property type="entry name" value="SULFURTRANSFERASE TUSE"/>
    <property type="match status" value="1"/>
</dbReference>
<dbReference type="PANTHER" id="PTHR37010:SF1">
    <property type="entry name" value="SULFURTRANSFERASE TUSE"/>
    <property type="match status" value="1"/>
</dbReference>
<dbReference type="Pfam" id="PF04358">
    <property type="entry name" value="DsrC"/>
    <property type="match status" value="1"/>
</dbReference>
<dbReference type="PIRSF" id="PIRSF006223">
    <property type="entry name" value="DsrC_TusE"/>
    <property type="match status" value="1"/>
</dbReference>
<dbReference type="SUPFAM" id="SSF69721">
    <property type="entry name" value="DsrC, the gamma subunit of dissimilatory sulfite reductase"/>
    <property type="match status" value="1"/>
</dbReference>
<feature type="chain" id="PRO_0000234611" description="Sulfurtransferase TusE">
    <location>
        <begin position="1"/>
        <end position="109"/>
    </location>
</feature>
<feature type="active site" description="Cysteine persulfide intermediate" evidence="1">
    <location>
        <position position="108"/>
    </location>
</feature>
<reference key="1">
    <citation type="journal article" date="2002" name="Proc. Natl. Acad. Sci. U.S.A.">
        <title>Extensive mosaic structure revealed by the complete genome sequence of uropathogenic Escherichia coli.</title>
        <authorList>
            <person name="Welch R.A."/>
            <person name="Burland V."/>
            <person name="Plunkett G. III"/>
            <person name="Redford P."/>
            <person name="Roesch P."/>
            <person name="Rasko D."/>
            <person name="Buckles E.L."/>
            <person name="Liou S.-R."/>
            <person name="Boutin A."/>
            <person name="Hackett J."/>
            <person name="Stroud D."/>
            <person name="Mayhew G.F."/>
            <person name="Rose D.J."/>
            <person name="Zhou S."/>
            <person name="Schwartz D.C."/>
            <person name="Perna N.T."/>
            <person name="Mobley H.L.T."/>
            <person name="Donnenberg M.S."/>
            <person name="Blattner F.R."/>
        </authorList>
    </citation>
    <scope>NUCLEOTIDE SEQUENCE [LARGE SCALE GENOMIC DNA]</scope>
    <source>
        <strain>CFT073 / ATCC 700928 / UPEC</strain>
    </source>
</reference>
<organism>
    <name type="scientific">Escherichia coli O6:H1 (strain CFT073 / ATCC 700928 / UPEC)</name>
    <dbReference type="NCBI Taxonomy" id="199310"/>
    <lineage>
        <taxon>Bacteria</taxon>
        <taxon>Pseudomonadati</taxon>
        <taxon>Pseudomonadota</taxon>
        <taxon>Gammaproteobacteria</taxon>
        <taxon>Enterobacterales</taxon>
        <taxon>Enterobacteriaceae</taxon>
        <taxon>Escherichia</taxon>
    </lineage>
</organism>
<gene>
    <name type="primary">tusE</name>
    <name type="ordered locus">c1107</name>
</gene>